<organism>
    <name type="scientific">Dictyostelium discoideum</name>
    <name type="common">Social amoeba</name>
    <dbReference type="NCBI Taxonomy" id="44689"/>
    <lineage>
        <taxon>Eukaryota</taxon>
        <taxon>Amoebozoa</taxon>
        <taxon>Evosea</taxon>
        <taxon>Eumycetozoa</taxon>
        <taxon>Dictyostelia</taxon>
        <taxon>Dictyosteliales</taxon>
        <taxon>Dictyosteliaceae</taxon>
        <taxon>Dictyostelium</taxon>
    </lineage>
</organism>
<sequence>MSTNSDNDKIFQEVQKFVKNYDLNKDGSVTSFDIYRSFLKKMDGDIFKASQAAGVLCSTVDMDHDGKFTYQEIAKYCADEAKKNVEQNAEIAALADVEAMLLRFDKDKDKKLTKTEFVEYFKGNGHTPYSDRDQVLKIIDLDKDGCVSANELQEWFKKRRIDYARMVSARGPNC</sequence>
<proteinExistence type="evidence at protein level"/>
<reference key="1">
    <citation type="journal article" date="2003" name="Dev. Growth Differ.">
        <title>Identification and characterization of novel calcium-binding proteins of Dictyostelium and their spatial expression patterns during development.</title>
        <authorList>
            <person name="Sakamoto H."/>
            <person name="Nishio K."/>
            <person name="Tomisako M."/>
            <person name="Kuwayama H."/>
            <person name="Tanaka Y."/>
            <person name="Suetake I."/>
            <person name="Tajima S."/>
            <person name="Ogihara S."/>
            <person name="Coukell B."/>
            <person name="Maeda M."/>
        </authorList>
    </citation>
    <scope>NUCLEOTIDE SEQUENCE [MRNA]</scope>
    <scope>CALCIUM-BINDING</scope>
    <scope>DEVELOPMENTAL STAGE</scope>
    <source>
        <strain>AX4</strain>
    </source>
</reference>
<reference key="2">
    <citation type="journal article" date="2005" name="Nature">
        <title>The genome of the social amoeba Dictyostelium discoideum.</title>
        <authorList>
            <person name="Eichinger L."/>
            <person name="Pachebat J.A."/>
            <person name="Gloeckner G."/>
            <person name="Rajandream M.A."/>
            <person name="Sucgang R."/>
            <person name="Berriman M."/>
            <person name="Song J."/>
            <person name="Olsen R."/>
            <person name="Szafranski K."/>
            <person name="Xu Q."/>
            <person name="Tunggal B."/>
            <person name="Kummerfeld S."/>
            <person name="Madera M."/>
            <person name="Konfortov B.A."/>
            <person name="Rivero F."/>
            <person name="Bankier A.T."/>
            <person name="Lehmann R."/>
            <person name="Hamlin N."/>
            <person name="Davies R."/>
            <person name="Gaudet P."/>
            <person name="Fey P."/>
            <person name="Pilcher K."/>
            <person name="Chen G."/>
            <person name="Saunders D."/>
            <person name="Sodergren E.J."/>
            <person name="Davis P."/>
            <person name="Kerhornou A."/>
            <person name="Nie X."/>
            <person name="Hall N."/>
            <person name="Anjard C."/>
            <person name="Hemphill L."/>
            <person name="Bason N."/>
            <person name="Farbrother P."/>
            <person name="Desany B."/>
            <person name="Just E."/>
            <person name="Morio T."/>
            <person name="Rost R."/>
            <person name="Churcher C.M."/>
            <person name="Cooper J."/>
            <person name="Haydock S."/>
            <person name="van Driessche N."/>
            <person name="Cronin A."/>
            <person name="Goodhead I."/>
            <person name="Muzny D.M."/>
            <person name="Mourier T."/>
            <person name="Pain A."/>
            <person name="Lu M."/>
            <person name="Harper D."/>
            <person name="Lindsay R."/>
            <person name="Hauser H."/>
            <person name="James K.D."/>
            <person name="Quiles M."/>
            <person name="Madan Babu M."/>
            <person name="Saito T."/>
            <person name="Buchrieser C."/>
            <person name="Wardroper A."/>
            <person name="Felder M."/>
            <person name="Thangavelu M."/>
            <person name="Johnson D."/>
            <person name="Knights A."/>
            <person name="Loulseged H."/>
            <person name="Mungall K.L."/>
            <person name="Oliver K."/>
            <person name="Price C."/>
            <person name="Quail M.A."/>
            <person name="Urushihara H."/>
            <person name="Hernandez J."/>
            <person name="Rabbinowitsch E."/>
            <person name="Steffen D."/>
            <person name="Sanders M."/>
            <person name="Ma J."/>
            <person name="Kohara Y."/>
            <person name="Sharp S."/>
            <person name="Simmonds M.N."/>
            <person name="Spiegler S."/>
            <person name="Tivey A."/>
            <person name="Sugano S."/>
            <person name="White B."/>
            <person name="Walker D."/>
            <person name="Woodward J.R."/>
            <person name="Winckler T."/>
            <person name="Tanaka Y."/>
            <person name="Shaulsky G."/>
            <person name="Schleicher M."/>
            <person name="Weinstock G.M."/>
            <person name="Rosenthal A."/>
            <person name="Cox E.C."/>
            <person name="Chisholm R.L."/>
            <person name="Gibbs R.A."/>
            <person name="Loomis W.F."/>
            <person name="Platzer M."/>
            <person name="Kay R.R."/>
            <person name="Williams J.G."/>
            <person name="Dear P.H."/>
            <person name="Noegel A.A."/>
            <person name="Barrell B.G."/>
            <person name="Kuspa A."/>
        </authorList>
    </citation>
    <scope>NUCLEOTIDE SEQUENCE [LARGE SCALE GENOMIC DNA]</scope>
    <source>
        <strain>AX4</strain>
    </source>
</reference>
<keyword id="KW-0106">Calcium</keyword>
<keyword id="KW-0479">Metal-binding</keyword>
<keyword id="KW-1185">Reference proteome</keyword>
<keyword id="KW-0677">Repeat</keyword>
<accession>Q54QT9</accession>
<accession>Q966R2</accession>
<protein>
    <recommendedName>
        <fullName>Calcium-binding protein F</fullName>
    </recommendedName>
    <alternativeName>
        <fullName>Calcium-binding protein 6</fullName>
    </alternativeName>
</protein>
<evidence type="ECO:0000255" key="1">
    <source>
        <dbReference type="PROSITE-ProRule" id="PRU00448"/>
    </source>
</evidence>
<evidence type="ECO:0000269" key="2">
    <source>
    </source>
</evidence>
<dbReference type="EMBL" id="AB070448">
    <property type="protein sequence ID" value="BAB63906.1"/>
    <property type="molecule type" value="mRNA"/>
</dbReference>
<dbReference type="EMBL" id="AAFI02000056">
    <property type="protein sequence ID" value="EAL65572.1"/>
    <property type="molecule type" value="Genomic_DNA"/>
</dbReference>
<dbReference type="RefSeq" id="XP_638934.1">
    <property type="nucleotide sequence ID" value="XM_633842.1"/>
</dbReference>
<dbReference type="SMR" id="Q54QT9"/>
<dbReference type="FunCoup" id="Q54QT9">
    <property type="interactions" value="3"/>
</dbReference>
<dbReference type="PaxDb" id="44689-DDB0191383"/>
<dbReference type="EnsemblProtists" id="EAL65572">
    <property type="protein sequence ID" value="EAL65572"/>
    <property type="gene ID" value="DDB_G0283611"/>
</dbReference>
<dbReference type="GeneID" id="8624173"/>
<dbReference type="KEGG" id="ddi:DDB_G0283611"/>
<dbReference type="dictyBase" id="DDB_G0283611">
    <property type="gene designation" value="cbpF"/>
</dbReference>
<dbReference type="VEuPathDB" id="AmoebaDB:DDB_G0283611"/>
<dbReference type="HOGENOM" id="CLU_1605758_0_0_1"/>
<dbReference type="InParanoid" id="Q54QT9"/>
<dbReference type="PhylomeDB" id="Q54QT9"/>
<dbReference type="PRO" id="PR:Q54QT9"/>
<dbReference type="Proteomes" id="UP000002195">
    <property type="component" value="Chromosome 4"/>
</dbReference>
<dbReference type="GO" id="GO:0005509">
    <property type="term" value="F:calcium ion binding"/>
    <property type="evidence" value="ECO:0000314"/>
    <property type="project" value="dictyBase"/>
</dbReference>
<dbReference type="FunFam" id="1.10.238.10:FF:000930">
    <property type="entry name" value="Calcium-binding protein G"/>
    <property type="match status" value="1"/>
</dbReference>
<dbReference type="Gene3D" id="1.10.238.10">
    <property type="entry name" value="EF-hand"/>
    <property type="match status" value="2"/>
</dbReference>
<dbReference type="InterPro" id="IPR011992">
    <property type="entry name" value="EF-hand-dom_pair"/>
</dbReference>
<dbReference type="InterPro" id="IPR018247">
    <property type="entry name" value="EF_Hand_1_Ca_BS"/>
</dbReference>
<dbReference type="InterPro" id="IPR002048">
    <property type="entry name" value="EF_hand_dom"/>
</dbReference>
<dbReference type="PANTHER" id="PTHR10827:SF85">
    <property type="entry name" value="CALCIUM-BINDING PROTEIN"/>
    <property type="match status" value="1"/>
</dbReference>
<dbReference type="PANTHER" id="PTHR10827">
    <property type="entry name" value="RETICULOCALBIN"/>
    <property type="match status" value="1"/>
</dbReference>
<dbReference type="Pfam" id="PF13499">
    <property type="entry name" value="EF-hand_7"/>
    <property type="match status" value="1"/>
</dbReference>
<dbReference type="SMART" id="SM00054">
    <property type="entry name" value="EFh"/>
    <property type="match status" value="4"/>
</dbReference>
<dbReference type="SUPFAM" id="SSF47473">
    <property type="entry name" value="EF-hand"/>
    <property type="match status" value="1"/>
</dbReference>
<dbReference type="PROSITE" id="PS00018">
    <property type="entry name" value="EF_HAND_1"/>
    <property type="match status" value="3"/>
</dbReference>
<dbReference type="PROSITE" id="PS50222">
    <property type="entry name" value="EF_HAND_2"/>
    <property type="match status" value="4"/>
</dbReference>
<name>CBPF_DICDI</name>
<comment type="developmental stage">
    <text evidence="2">Expression peaks at the slug stage, and is enriched in the prespore region.</text>
</comment>
<gene>
    <name type="primary">cbpF</name>
    <name type="synonym">cbp6</name>
    <name type="ORF">DDB_G0283611</name>
</gene>
<feature type="chain" id="PRO_0000312585" description="Calcium-binding protein F">
    <location>
        <begin position="1"/>
        <end position="174"/>
    </location>
</feature>
<feature type="domain" description="EF-hand 1" evidence="1">
    <location>
        <begin position="9"/>
        <end position="44"/>
    </location>
</feature>
<feature type="domain" description="EF-hand 2" evidence="1">
    <location>
        <begin position="60"/>
        <end position="83"/>
    </location>
</feature>
<feature type="domain" description="EF-hand 3" evidence="1">
    <location>
        <begin position="92"/>
        <end position="127"/>
    </location>
</feature>
<feature type="domain" description="EF-hand 4" evidence="1">
    <location>
        <begin position="133"/>
        <end position="162"/>
    </location>
</feature>
<feature type="binding site" evidence="1">
    <location>
        <position position="22"/>
    </location>
    <ligand>
        <name>Ca(2+)</name>
        <dbReference type="ChEBI" id="CHEBI:29108"/>
        <label>1</label>
    </ligand>
</feature>
<feature type="binding site" evidence="1">
    <location>
        <position position="24"/>
    </location>
    <ligand>
        <name>Ca(2+)</name>
        <dbReference type="ChEBI" id="CHEBI:29108"/>
        <label>1</label>
    </ligand>
</feature>
<feature type="binding site" evidence="1">
    <location>
        <position position="26"/>
    </location>
    <ligand>
        <name>Ca(2+)</name>
        <dbReference type="ChEBI" id="CHEBI:29108"/>
        <label>1</label>
    </ligand>
</feature>
<feature type="binding site" evidence="1">
    <location>
        <position position="28"/>
    </location>
    <ligand>
        <name>Ca(2+)</name>
        <dbReference type="ChEBI" id="CHEBI:29108"/>
        <label>1</label>
    </ligand>
</feature>
<feature type="binding site" evidence="1">
    <location>
        <position position="33"/>
    </location>
    <ligand>
        <name>Ca(2+)</name>
        <dbReference type="ChEBI" id="CHEBI:29108"/>
        <label>1</label>
    </ligand>
</feature>
<feature type="binding site" evidence="1">
    <location>
        <position position="105"/>
    </location>
    <ligand>
        <name>Ca(2+)</name>
        <dbReference type="ChEBI" id="CHEBI:29108"/>
        <label>2</label>
    </ligand>
</feature>
<feature type="binding site" evidence="1">
    <location>
        <position position="107"/>
    </location>
    <ligand>
        <name>Ca(2+)</name>
        <dbReference type="ChEBI" id="CHEBI:29108"/>
        <label>2</label>
    </ligand>
</feature>
<feature type="binding site" evidence="1">
    <location>
        <position position="109"/>
    </location>
    <ligand>
        <name>Ca(2+)</name>
        <dbReference type="ChEBI" id="CHEBI:29108"/>
        <label>2</label>
    </ligand>
</feature>
<feature type="binding site" evidence="1">
    <location>
        <position position="111"/>
    </location>
    <ligand>
        <name>Ca(2+)</name>
        <dbReference type="ChEBI" id="CHEBI:29108"/>
        <label>2</label>
    </ligand>
</feature>
<feature type="binding site" evidence="1">
    <location>
        <position position="116"/>
    </location>
    <ligand>
        <name>Ca(2+)</name>
        <dbReference type="ChEBI" id="CHEBI:29108"/>
        <label>2</label>
    </ligand>
</feature>
<feature type="binding site" evidence="1">
    <location>
        <position position="140"/>
    </location>
    <ligand>
        <name>Ca(2+)</name>
        <dbReference type="ChEBI" id="CHEBI:29108"/>
        <label>3</label>
    </ligand>
</feature>
<feature type="binding site" evidence="1">
    <location>
        <position position="142"/>
    </location>
    <ligand>
        <name>Ca(2+)</name>
        <dbReference type="ChEBI" id="CHEBI:29108"/>
        <label>3</label>
    </ligand>
</feature>
<feature type="binding site" evidence="1">
    <location>
        <position position="144"/>
    </location>
    <ligand>
        <name>Ca(2+)</name>
        <dbReference type="ChEBI" id="CHEBI:29108"/>
        <label>3</label>
    </ligand>
</feature>
<feature type="binding site" evidence="1">
    <location>
        <position position="146"/>
    </location>
    <ligand>
        <name>Ca(2+)</name>
        <dbReference type="ChEBI" id="CHEBI:29108"/>
        <label>3</label>
    </ligand>
</feature>
<feature type="binding site" evidence="1">
    <location>
        <position position="151"/>
    </location>
    <ligand>
        <name>Ca(2+)</name>
        <dbReference type="ChEBI" id="CHEBI:29108"/>
        <label>3</label>
    </ligand>
</feature>